<proteinExistence type="inferred from homology"/>
<reference key="1">
    <citation type="journal article" date="2005" name="J. Bacteriol.">
        <title>Complete genome sequence and analysis of the multiresistant nosocomial pathogen Corynebacterium jeikeium K411, a lipid-requiring bacterium of the human skin flora.</title>
        <authorList>
            <person name="Tauch A."/>
            <person name="Kaiser O."/>
            <person name="Hain T."/>
            <person name="Goesmann A."/>
            <person name="Weisshaar B."/>
            <person name="Albersmeier A."/>
            <person name="Bekel T."/>
            <person name="Bischoff N."/>
            <person name="Brune I."/>
            <person name="Chakraborty T."/>
            <person name="Kalinowski J."/>
            <person name="Meyer F."/>
            <person name="Rupp O."/>
            <person name="Schneiker S."/>
            <person name="Viehoever P."/>
            <person name="Puehler A."/>
        </authorList>
    </citation>
    <scope>NUCLEOTIDE SEQUENCE [LARGE SCALE GENOMIC DNA]</scope>
    <source>
        <strain>K411</strain>
    </source>
</reference>
<organism>
    <name type="scientific">Corynebacterium jeikeium (strain K411)</name>
    <dbReference type="NCBI Taxonomy" id="306537"/>
    <lineage>
        <taxon>Bacteria</taxon>
        <taxon>Bacillati</taxon>
        <taxon>Actinomycetota</taxon>
        <taxon>Actinomycetes</taxon>
        <taxon>Mycobacteriales</taxon>
        <taxon>Corynebacteriaceae</taxon>
        <taxon>Corynebacterium</taxon>
    </lineage>
</organism>
<gene>
    <name evidence="1" type="primary">dnaA</name>
    <name type="ordered locus">jk0001</name>
</gene>
<comment type="function">
    <text evidence="1">Plays an essential role in the initiation and regulation of chromosomal replication. ATP-DnaA binds to the origin of replication (oriC) to initiate formation of the DNA replication initiation complex once per cell cycle. Binds the DnaA box (a 9 base pair repeat at the origin) and separates the double-stranded (ds)DNA. Forms a right-handed helical filament on oriC DNA; dsDNA binds to the exterior of the filament while single-stranded (ss)DNA is stabiized in the filament's interior. The ATP-DnaA-oriC complex binds and stabilizes one strand of the AT-rich DNA unwinding element (DUE), permitting loading of DNA polymerase. After initiation quickly degrades to an ADP-DnaA complex that is not apt for DNA replication. Binds acidic phospholipids.</text>
</comment>
<comment type="subunit">
    <text evidence="1">Oligomerizes as a right-handed, spiral filament on DNA at oriC.</text>
</comment>
<comment type="subcellular location">
    <subcellularLocation>
        <location evidence="1">Cytoplasm</location>
    </subcellularLocation>
</comment>
<comment type="domain">
    <text evidence="1">Domain I is involved in oligomerization and binding regulators, domain II is flexibile and of varying length in different bacteria, domain III forms the AAA+ region, while domain IV binds dsDNA.</text>
</comment>
<comment type="similarity">
    <text evidence="1">Belongs to the DnaA family.</text>
</comment>
<protein>
    <recommendedName>
        <fullName evidence="1">Chromosomal replication initiator protein DnaA</fullName>
    </recommendedName>
</protein>
<name>DNAA_CORJK</name>
<dbReference type="EMBL" id="CR931997">
    <property type="protein sequence ID" value="CAI36150.1"/>
    <property type="molecule type" value="Genomic_DNA"/>
</dbReference>
<dbReference type="RefSeq" id="WP_011272776.1">
    <property type="nucleotide sequence ID" value="NC_007164.1"/>
</dbReference>
<dbReference type="SMR" id="Q4JYF7"/>
<dbReference type="STRING" id="306537.jk0001"/>
<dbReference type="KEGG" id="cjk:jk0001"/>
<dbReference type="PATRIC" id="fig|306537.10.peg.11"/>
<dbReference type="eggNOG" id="COG0593">
    <property type="taxonomic scope" value="Bacteria"/>
</dbReference>
<dbReference type="HOGENOM" id="CLU_026910_2_0_11"/>
<dbReference type="OrthoDB" id="9807019at2"/>
<dbReference type="Proteomes" id="UP000000545">
    <property type="component" value="Chromosome"/>
</dbReference>
<dbReference type="GO" id="GO:0005737">
    <property type="term" value="C:cytoplasm"/>
    <property type="evidence" value="ECO:0007669"/>
    <property type="project" value="UniProtKB-SubCell"/>
</dbReference>
<dbReference type="GO" id="GO:0005886">
    <property type="term" value="C:plasma membrane"/>
    <property type="evidence" value="ECO:0007669"/>
    <property type="project" value="TreeGrafter"/>
</dbReference>
<dbReference type="GO" id="GO:0005524">
    <property type="term" value="F:ATP binding"/>
    <property type="evidence" value="ECO:0007669"/>
    <property type="project" value="UniProtKB-UniRule"/>
</dbReference>
<dbReference type="GO" id="GO:0016887">
    <property type="term" value="F:ATP hydrolysis activity"/>
    <property type="evidence" value="ECO:0007669"/>
    <property type="project" value="InterPro"/>
</dbReference>
<dbReference type="GO" id="GO:0003688">
    <property type="term" value="F:DNA replication origin binding"/>
    <property type="evidence" value="ECO:0007669"/>
    <property type="project" value="UniProtKB-UniRule"/>
</dbReference>
<dbReference type="GO" id="GO:0008289">
    <property type="term" value="F:lipid binding"/>
    <property type="evidence" value="ECO:0007669"/>
    <property type="project" value="UniProtKB-KW"/>
</dbReference>
<dbReference type="GO" id="GO:0006270">
    <property type="term" value="P:DNA replication initiation"/>
    <property type="evidence" value="ECO:0007669"/>
    <property type="project" value="UniProtKB-UniRule"/>
</dbReference>
<dbReference type="GO" id="GO:0006275">
    <property type="term" value="P:regulation of DNA replication"/>
    <property type="evidence" value="ECO:0007669"/>
    <property type="project" value="UniProtKB-UniRule"/>
</dbReference>
<dbReference type="CDD" id="cd00009">
    <property type="entry name" value="AAA"/>
    <property type="match status" value="1"/>
</dbReference>
<dbReference type="CDD" id="cd06571">
    <property type="entry name" value="Bac_DnaA_C"/>
    <property type="match status" value="1"/>
</dbReference>
<dbReference type="FunFam" id="1.10.1750.10:FF:000002">
    <property type="entry name" value="Chromosomal replication initiator protein DnaA"/>
    <property type="match status" value="1"/>
</dbReference>
<dbReference type="FunFam" id="3.40.50.300:FF:000150">
    <property type="entry name" value="Chromosomal replication initiator protein DnaA"/>
    <property type="match status" value="1"/>
</dbReference>
<dbReference type="Gene3D" id="1.10.1750.10">
    <property type="match status" value="1"/>
</dbReference>
<dbReference type="Gene3D" id="1.10.8.60">
    <property type="match status" value="1"/>
</dbReference>
<dbReference type="Gene3D" id="3.40.50.300">
    <property type="entry name" value="P-loop containing nucleotide triphosphate hydrolases"/>
    <property type="match status" value="1"/>
</dbReference>
<dbReference type="HAMAP" id="MF_00377">
    <property type="entry name" value="DnaA_bact"/>
    <property type="match status" value="1"/>
</dbReference>
<dbReference type="InterPro" id="IPR003593">
    <property type="entry name" value="AAA+_ATPase"/>
</dbReference>
<dbReference type="InterPro" id="IPR001957">
    <property type="entry name" value="Chromosome_initiator_DnaA"/>
</dbReference>
<dbReference type="InterPro" id="IPR020591">
    <property type="entry name" value="Chromosome_initiator_DnaA-like"/>
</dbReference>
<dbReference type="InterPro" id="IPR018312">
    <property type="entry name" value="Chromosome_initiator_DnaA_CS"/>
</dbReference>
<dbReference type="InterPro" id="IPR013159">
    <property type="entry name" value="DnaA_C"/>
</dbReference>
<dbReference type="InterPro" id="IPR013317">
    <property type="entry name" value="DnaA_dom"/>
</dbReference>
<dbReference type="InterPro" id="IPR027417">
    <property type="entry name" value="P-loop_NTPase"/>
</dbReference>
<dbReference type="InterPro" id="IPR010921">
    <property type="entry name" value="Trp_repressor/repl_initiator"/>
</dbReference>
<dbReference type="NCBIfam" id="TIGR00362">
    <property type="entry name" value="DnaA"/>
    <property type="match status" value="1"/>
</dbReference>
<dbReference type="NCBIfam" id="NF010686">
    <property type="entry name" value="PRK14086.1"/>
    <property type="match status" value="1"/>
</dbReference>
<dbReference type="PANTHER" id="PTHR30050">
    <property type="entry name" value="CHROMOSOMAL REPLICATION INITIATOR PROTEIN DNAA"/>
    <property type="match status" value="1"/>
</dbReference>
<dbReference type="PANTHER" id="PTHR30050:SF2">
    <property type="entry name" value="CHROMOSOMAL REPLICATION INITIATOR PROTEIN DNAA"/>
    <property type="match status" value="1"/>
</dbReference>
<dbReference type="Pfam" id="PF00308">
    <property type="entry name" value="Bac_DnaA"/>
    <property type="match status" value="1"/>
</dbReference>
<dbReference type="Pfam" id="PF08299">
    <property type="entry name" value="Bac_DnaA_C"/>
    <property type="match status" value="1"/>
</dbReference>
<dbReference type="PRINTS" id="PR00051">
    <property type="entry name" value="DNAA"/>
</dbReference>
<dbReference type="SMART" id="SM00382">
    <property type="entry name" value="AAA"/>
    <property type="match status" value="1"/>
</dbReference>
<dbReference type="SMART" id="SM00760">
    <property type="entry name" value="Bac_DnaA_C"/>
    <property type="match status" value="1"/>
</dbReference>
<dbReference type="SUPFAM" id="SSF52540">
    <property type="entry name" value="P-loop containing nucleoside triphosphate hydrolases"/>
    <property type="match status" value="1"/>
</dbReference>
<dbReference type="SUPFAM" id="SSF48295">
    <property type="entry name" value="TrpR-like"/>
    <property type="match status" value="1"/>
</dbReference>
<dbReference type="PROSITE" id="PS01008">
    <property type="entry name" value="DNAA"/>
    <property type="match status" value="1"/>
</dbReference>
<accession>Q4JYF7</accession>
<evidence type="ECO:0000255" key="1">
    <source>
        <dbReference type="HAMAP-Rule" id="MF_00377"/>
    </source>
</evidence>
<evidence type="ECO:0000256" key="2">
    <source>
        <dbReference type="SAM" id="MobiDB-lite"/>
    </source>
</evidence>
<feature type="chain" id="PRO_1000060010" description="Chromosomal replication initiator protein DnaA">
    <location>
        <begin position="1"/>
        <end position="583"/>
    </location>
</feature>
<feature type="region of interest" description="Domain I, interacts with DnaA modulators" evidence="1">
    <location>
        <begin position="1"/>
        <end position="91"/>
    </location>
</feature>
<feature type="region of interest" description="Domain II" evidence="1">
    <location>
        <begin position="91"/>
        <end position="241"/>
    </location>
</feature>
<feature type="region of interest" description="Disordered" evidence="2">
    <location>
        <begin position="151"/>
        <end position="239"/>
    </location>
</feature>
<feature type="region of interest" description="Domain III, AAA+ region" evidence="1">
    <location>
        <begin position="242"/>
        <end position="458"/>
    </location>
</feature>
<feature type="region of interest" description="Domain IV, binds dsDNA" evidence="1">
    <location>
        <begin position="459"/>
        <end position="583"/>
    </location>
</feature>
<feature type="compositionally biased region" description="Basic and acidic residues" evidence="2">
    <location>
        <begin position="172"/>
        <end position="182"/>
    </location>
</feature>
<feature type="binding site" evidence="1">
    <location>
        <position position="286"/>
    </location>
    <ligand>
        <name>ATP</name>
        <dbReference type="ChEBI" id="CHEBI:30616"/>
    </ligand>
</feature>
<feature type="binding site" evidence="1">
    <location>
        <position position="288"/>
    </location>
    <ligand>
        <name>ATP</name>
        <dbReference type="ChEBI" id="CHEBI:30616"/>
    </ligand>
</feature>
<feature type="binding site" evidence="1">
    <location>
        <position position="289"/>
    </location>
    <ligand>
        <name>ATP</name>
        <dbReference type="ChEBI" id="CHEBI:30616"/>
    </ligand>
</feature>
<feature type="binding site" evidence="1">
    <location>
        <position position="290"/>
    </location>
    <ligand>
        <name>ATP</name>
        <dbReference type="ChEBI" id="CHEBI:30616"/>
    </ligand>
</feature>
<keyword id="KW-0067">ATP-binding</keyword>
<keyword id="KW-0963">Cytoplasm</keyword>
<keyword id="KW-0235">DNA replication</keyword>
<keyword id="KW-0238">DNA-binding</keyword>
<keyword id="KW-0446">Lipid-binding</keyword>
<keyword id="KW-0547">Nucleotide-binding</keyword>
<keyword id="KW-1185">Reference proteome</keyword>
<sequence>MSNSNFSIEEHFPDMWDAIMHDWLADSSSANPDPDLPVISPKQRSLLRKVTPVGLMGRIVVLETPNKWTKESIEKDLIDPIKHVLKTRLDLSVSLAITSTNGESENRAEAADDSHTRVDAVGDTHEGASQKGSVATADDLSMSQVEELVNKAEQRDGASQAGVSSAAETAEEAARRREHDADELAGQYSATENHIDPNPSPTPTRWTNKETAHRPAPRHTSPHTPSPQPSSSFNDGLDGESLLNKNYTFENFVVGSSNNFAAAACRAVAEAPAKAYNPLFIWGESGLGKTHLLHAIGHYAKELQPNMRVKYVSSEELTNDFINSIANDTRESFKRRYRNLDMLIVDDIQFLQNKESTQEEFFHTFNALHQANKQIVLSSDRPPRQLTTLEDRLRTRFEGGLITDVQTPDLETRIAILTKKAESDNVQLPEDVKVLIASRYEKSIRELDGALIRVTAYCALSHEPLTVETAEIALRDISPADQDVEIVPQHVIEVVANYFNLTTDELVGKGRAKKFVQARQIAMYLCRELTDLSLPKLGSAFGGRDHTTVMYAERRVRESLSENKKVFDQVQELTQKIKSHARD</sequence>